<name>DSK_DROSI</name>
<keyword id="KW-0027">Amidation</keyword>
<keyword id="KW-0165">Cleavage on pair of basic residues</keyword>
<keyword id="KW-0372">Hormone</keyword>
<keyword id="KW-0527">Neuropeptide</keyword>
<keyword id="KW-1185">Reference proteome</keyword>
<keyword id="KW-0964">Secreted</keyword>
<keyword id="KW-0732">Signal</keyword>
<keyword id="KW-0765">Sulfation</keyword>
<gene>
    <name evidence="6" type="primary">Dsk</name>
    <name type="ORF">GD19701</name>
</gene>
<sequence>MGLRSCTHLATLFMTLWAVAFCFLVVVPIPAQTTSLQNAKDDRRLQELESKIGAESDQTNANLVGPSFSRFGDRRNQKAISFGRRVPLISRPMIPIELDLLMDNDDERTKAKRFDDYGHMRFGKRGGDDQFDDYGHMRFGR</sequence>
<evidence type="ECO:0000250" key="1">
    <source>
        <dbReference type="UniProtKB" id="P09040"/>
    </source>
</evidence>
<evidence type="ECO:0000255" key="2"/>
<evidence type="ECO:0000269" key="3">
    <source>
    </source>
</evidence>
<evidence type="ECO:0000303" key="4">
    <source>
    </source>
</evidence>
<evidence type="ECO:0000305" key="5"/>
<evidence type="ECO:0000312" key="6">
    <source>
        <dbReference type="EMBL" id="ACC99373.1"/>
    </source>
</evidence>
<reference evidence="6" key="1">
    <citation type="submission" date="2008-04" db="EMBL/GenBank/DDBJ databases">
        <title>A molecular phylogeny for the Drosophila melanogaster subgroup.</title>
        <authorList>
            <person name="Ke F."/>
        </authorList>
    </citation>
    <scope>NUCLEOTIDE SEQUENCE [GENOMIC DNA]</scope>
</reference>
<reference key="2">
    <citation type="journal article" date="2007" name="Nature">
        <title>Evolution of genes and genomes on the Drosophila phylogeny.</title>
        <authorList>
            <consortium name="Drosophila 12 genomes consortium"/>
        </authorList>
    </citation>
    <scope>NUCLEOTIDE SEQUENCE [LARGE SCALE GENOMIC DNA]</scope>
</reference>
<reference evidence="5" key="3">
    <citation type="journal article" date="2007" name="J. Insect Physiol.">
        <title>The drosulfakinin 0 (DSK 0) peptide encoded in the conserved Dsk gene affects adult Drosophila melanogaster crop contractions.</title>
        <authorList>
            <person name="Palmer G.C."/>
            <person name="Tran T."/>
            <person name="Duttlinger A."/>
            <person name="Nichols R."/>
        </authorList>
    </citation>
    <scope>IDENTIFICATION</scope>
    <scope>AMIDATION AT PHE-82 AND PHE-122</scope>
    <scope>SULFATION AT TYR-117</scope>
</reference>
<proteinExistence type="evidence at protein level"/>
<feature type="signal peptide" evidence="2">
    <location>
        <begin position="1"/>
        <end position="31"/>
    </location>
</feature>
<feature type="propeptide" id="PRO_0000351180" evidence="3">
    <location>
        <begin position="32"/>
        <end position="73"/>
    </location>
</feature>
<feature type="peptide" id="PRO_0000351181" description="Drosulfakinin-0" evidence="2 4">
    <location>
        <begin position="76"/>
        <end position="82"/>
    </location>
</feature>
<feature type="propeptide" id="PRO_0000351182" evidence="3">
    <location>
        <begin position="86"/>
        <end position="111"/>
    </location>
</feature>
<feature type="peptide" id="PRO_0000351183" description="Drosulfakinin-1" evidence="2 4">
    <location>
        <begin position="114"/>
        <end position="122"/>
    </location>
</feature>
<feature type="peptide" id="PRO_0000351184" description="Drosulfakinin-2" evidence="1">
    <location>
        <begin position="126"/>
        <end position="139"/>
    </location>
</feature>
<feature type="modified residue" description="Phenylalanine amide" evidence="2 4">
    <location>
        <position position="82"/>
    </location>
</feature>
<feature type="modified residue" description="Sulfotyrosine" evidence="2 4">
    <location>
        <position position="117"/>
    </location>
</feature>
<feature type="modified residue" description="Phenylalanine amide" evidence="2 4">
    <location>
        <position position="122"/>
    </location>
</feature>
<feature type="modified residue" description="Sulfotyrosine" evidence="1">
    <location>
        <position position="134"/>
    </location>
</feature>
<feature type="modified residue" description="Phenylalanine amide" evidence="1">
    <location>
        <position position="139"/>
    </location>
</feature>
<feature type="sequence conflict" description="In Ref. 1; ACC99373." evidence="5" ref="1">
    <original>V</original>
    <variation>L</variation>
    <location>
        <position position="19"/>
    </location>
</feature>
<feature type="sequence conflict" description="In Ref. 1; ACC99373." evidence="5" ref="1">
    <original>T</original>
    <variation>P</variation>
    <location>
        <position position="59"/>
    </location>
</feature>
<accession>B2ZB99</accession>
<accession>B4QUX7</accession>
<protein>
    <recommendedName>
        <fullName evidence="4">Drosulfakinins</fullName>
    </recommendedName>
    <component>
        <recommendedName>
            <fullName evidence="4">Drosulfakinin-0</fullName>
            <shortName evidence="4">DSK-0</shortName>
        </recommendedName>
    </component>
    <component>
        <recommendedName>
            <fullName evidence="4">Drosulfakinin-1</fullName>
        </recommendedName>
        <alternativeName>
            <fullName evidence="4">Drosulfakinin I</fullName>
            <shortName evidence="4">DSK-I</shortName>
        </alternativeName>
    </component>
    <component>
        <recommendedName>
            <fullName evidence="4">Drosulfakinin-2</fullName>
        </recommendedName>
        <alternativeName>
            <fullName evidence="4">Drosulfakinin II</fullName>
            <shortName evidence="4">DSK-II</shortName>
        </alternativeName>
    </component>
</protein>
<dbReference type="EMBL" id="EU635464">
    <property type="protein sequence ID" value="ACC99373.1"/>
    <property type="molecule type" value="Genomic_DNA"/>
</dbReference>
<dbReference type="EMBL" id="CM000364">
    <property type="protein sequence ID" value="EDX11558.1"/>
    <property type="molecule type" value="Genomic_DNA"/>
</dbReference>
<dbReference type="STRING" id="7240.B2ZB99"/>
<dbReference type="EnsemblMetazoa" id="FBtr0219611">
    <property type="protein sequence ID" value="FBpp0218103"/>
    <property type="gene ID" value="FBgn0191192"/>
</dbReference>
<dbReference type="EnsemblMetazoa" id="XM_002102019.3">
    <property type="protein sequence ID" value="XP_002102055.1"/>
    <property type="gene ID" value="LOC6726642"/>
</dbReference>
<dbReference type="GeneID" id="6726642"/>
<dbReference type="KEGG" id="dsi:Dsimw501_GD19701"/>
<dbReference type="HOGENOM" id="CLU_1847224_0_0_1"/>
<dbReference type="OMA" id="FGDRRNQ"/>
<dbReference type="OrthoDB" id="6360815at2759"/>
<dbReference type="PhylomeDB" id="B2ZB99"/>
<dbReference type="Proteomes" id="UP000000304">
    <property type="component" value="Chromosome 3R"/>
</dbReference>
<dbReference type="Bgee" id="FBgn0191192">
    <property type="expression patterns" value="Expressed in adult organism and 2 other cell types or tissues"/>
</dbReference>
<dbReference type="GO" id="GO:0005576">
    <property type="term" value="C:extracellular region"/>
    <property type="evidence" value="ECO:0007669"/>
    <property type="project" value="UniProtKB-SubCell"/>
</dbReference>
<dbReference type="GO" id="GO:0005184">
    <property type="term" value="F:neuropeptide hormone activity"/>
    <property type="evidence" value="ECO:0007669"/>
    <property type="project" value="EnsemblMetazoa"/>
</dbReference>
<dbReference type="GO" id="GO:0071855">
    <property type="term" value="F:neuropeptide receptor binding"/>
    <property type="evidence" value="ECO:0007669"/>
    <property type="project" value="EnsemblMetazoa"/>
</dbReference>
<dbReference type="GO" id="GO:0008343">
    <property type="term" value="P:adult feeding behavior"/>
    <property type="evidence" value="ECO:0007669"/>
    <property type="project" value="EnsemblMetazoa"/>
</dbReference>
<dbReference type="GO" id="GO:0008344">
    <property type="term" value="P:adult locomotory behavior"/>
    <property type="evidence" value="ECO:0007669"/>
    <property type="project" value="EnsemblMetazoa"/>
</dbReference>
<dbReference type="GO" id="GO:0002121">
    <property type="term" value="P:inter-male aggressive behavior"/>
    <property type="evidence" value="ECO:0007669"/>
    <property type="project" value="EnsemblMetazoa"/>
</dbReference>
<dbReference type="GO" id="GO:0008345">
    <property type="term" value="P:larval locomotory behavior"/>
    <property type="evidence" value="ECO:0007669"/>
    <property type="project" value="EnsemblMetazoa"/>
</dbReference>
<dbReference type="GO" id="GO:0033555">
    <property type="term" value="P:multicellular organismal response to stress"/>
    <property type="evidence" value="ECO:0007669"/>
    <property type="project" value="EnsemblMetazoa"/>
</dbReference>
<dbReference type="GO" id="GO:0007528">
    <property type="term" value="P:neuromuscular junction development"/>
    <property type="evidence" value="ECO:0007669"/>
    <property type="project" value="EnsemblMetazoa"/>
</dbReference>
<dbReference type="GO" id="GO:0007218">
    <property type="term" value="P:neuropeptide signaling pathway"/>
    <property type="evidence" value="ECO:0007669"/>
    <property type="project" value="UniProtKB-KW"/>
</dbReference>
<dbReference type="GO" id="GO:0007204">
    <property type="term" value="P:positive regulation of cytosolic calcium ion concentration"/>
    <property type="evidence" value="ECO:0007669"/>
    <property type="project" value="EnsemblMetazoa"/>
</dbReference>
<dbReference type="GO" id="GO:0006940">
    <property type="term" value="P:regulation of smooth muscle contraction"/>
    <property type="evidence" value="ECO:0007669"/>
    <property type="project" value="EnsemblMetazoa"/>
</dbReference>
<dbReference type="GO" id="GO:0006939">
    <property type="term" value="P:smooth muscle contraction"/>
    <property type="evidence" value="ECO:0000250"/>
    <property type="project" value="UniProtKB"/>
</dbReference>
<dbReference type="InterPro" id="IPR013152">
    <property type="entry name" value="Gastrin/cholecystokinin_CS"/>
</dbReference>
<dbReference type="InterPro" id="IPR013259">
    <property type="entry name" value="Sulfakinin"/>
</dbReference>
<dbReference type="Pfam" id="PF08257">
    <property type="entry name" value="Sulfakinin"/>
    <property type="match status" value="2"/>
</dbReference>
<dbReference type="PROSITE" id="PS00259">
    <property type="entry name" value="GASTRIN"/>
    <property type="match status" value="2"/>
</dbReference>
<organism>
    <name type="scientific">Drosophila simulans</name>
    <name type="common">Fruit fly</name>
    <dbReference type="NCBI Taxonomy" id="7240"/>
    <lineage>
        <taxon>Eukaryota</taxon>
        <taxon>Metazoa</taxon>
        <taxon>Ecdysozoa</taxon>
        <taxon>Arthropoda</taxon>
        <taxon>Hexapoda</taxon>
        <taxon>Insecta</taxon>
        <taxon>Pterygota</taxon>
        <taxon>Neoptera</taxon>
        <taxon>Endopterygota</taxon>
        <taxon>Diptera</taxon>
        <taxon>Brachycera</taxon>
        <taxon>Muscomorpha</taxon>
        <taxon>Ephydroidea</taxon>
        <taxon>Drosophilidae</taxon>
        <taxon>Drosophila</taxon>
        <taxon>Sophophora</taxon>
    </lineage>
</organism>
<comment type="function">
    <text evidence="1">Drosulfakinin-0 (DSK 0) plays diverse biological roles including regulating gut muscle contraction in adults but not in larvae.</text>
</comment>
<comment type="subcellular location">
    <subcellularLocation>
        <location evidence="1">Secreted</location>
    </subcellularLocation>
</comment>
<comment type="similarity">
    <text evidence="2">Belongs to the gastrin/cholecystokinin family.</text>
</comment>